<organism>
    <name type="scientific">Spiroplasma citri</name>
    <dbReference type="NCBI Taxonomy" id="2133"/>
    <lineage>
        <taxon>Bacteria</taxon>
        <taxon>Bacillati</taxon>
        <taxon>Mycoplasmatota</taxon>
        <taxon>Mollicutes</taxon>
        <taxon>Entomoplasmatales</taxon>
        <taxon>Spiroplasmataceae</taxon>
        <taxon>Spiroplasma</taxon>
    </lineage>
</organism>
<evidence type="ECO:0000250" key="1"/>
<evidence type="ECO:0000250" key="2">
    <source>
        <dbReference type="UniProtKB" id="P0AB89"/>
    </source>
</evidence>
<evidence type="ECO:0000305" key="3"/>
<keyword id="KW-0456">Lyase</keyword>
<keyword id="KW-0658">Purine biosynthesis</keyword>
<name>PUR8_SPICI</name>
<accession>P52201</accession>
<reference key="1">
    <citation type="submission" date="1993-11" db="EMBL/GenBank/DDBJ databases">
        <authorList>
            <person name="Citti C."/>
            <person name="Saillard C."/>
            <person name="Bove J.M."/>
        </authorList>
    </citation>
    <scope>NUCLEOTIDE SEQUENCE [GENOMIC DNA]</scope>
    <source>
        <strain>R8A2HP</strain>
    </source>
</reference>
<comment type="function">
    <text evidence="2">Catalyzes two reactions in de novo purine nucleotide biosynthesis. Catalyzes the breakdown of 5-aminoimidazole- (N-succinylocarboxamide) ribotide (SAICAR or 2-[5-amino-1-(5-phospho-beta-D-ribosyl)imidazole-4-carboxamido]succinate) to 5-aminoimidazole-4-carboxamide ribotide (AICAR or 5-amino-1-(5-phospho-beta-D-ribosyl)imidazole-4-carboxamide) and fumarate, and of adenylosuccinate (ADS or N(6)-(1,2-dicarboxyethyl)-AMP) to adenosine monophosphate (AMP) and fumarate.</text>
</comment>
<comment type="catalytic activity">
    <reaction evidence="2">
        <text>N(6)-(1,2-dicarboxyethyl)-AMP = fumarate + AMP</text>
        <dbReference type="Rhea" id="RHEA:16853"/>
        <dbReference type="ChEBI" id="CHEBI:29806"/>
        <dbReference type="ChEBI" id="CHEBI:57567"/>
        <dbReference type="ChEBI" id="CHEBI:456215"/>
        <dbReference type="EC" id="4.3.2.2"/>
    </reaction>
    <physiologicalReaction direction="left-to-right" evidence="2">
        <dbReference type="Rhea" id="RHEA:16854"/>
    </physiologicalReaction>
</comment>
<comment type="catalytic activity">
    <reaction evidence="2">
        <text>(2S)-2-[5-amino-1-(5-phospho-beta-D-ribosyl)imidazole-4-carboxamido]succinate = 5-amino-1-(5-phospho-beta-D-ribosyl)imidazole-4-carboxamide + fumarate</text>
        <dbReference type="Rhea" id="RHEA:23920"/>
        <dbReference type="ChEBI" id="CHEBI:29806"/>
        <dbReference type="ChEBI" id="CHEBI:58443"/>
        <dbReference type="ChEBI" id="CHEBI:58475"/>
        <dbReference type="EC" id="4.3.2.2"/>
    </reaction>
    <physiologicalReaction direction="left-to-right" evidence="2">
        <dbReference type="Rhea" id="RHEA:23921"/>
    </physiologicalReaction>
</comment>
<comment type="pathway">
    <text>Purine metabolism; AMP biosynthesis via de novo pathway; AMP from IMP: step 2/2.</text>
</comment>
<comment type="pathway">
    <text>Purine metabolism; IMP biosynthesis via de novo pathway; 5-amino-1-(5-phospho-D-ribosyl)imidazole-4-carboxamide from 5-amino-1-(5-phospho-D-ribosyl)imidazole-4-carboxylate: step 2/2.</text>
</comment>
<comment type="subunit">
    <text evidence="1">Homotetramer and homodimer. Residues from neighboring subunits contribute catalytic and substrate-binding residues to each active site (By similarity).</text>
</comment>
<comment type="similarity">
    <text evidence="3">Belongs to the lyase 1 family. Adenylosuccinate lyase subfamily.</text>
</comment>
<dbReference type="EC" id="4.3.2.2" evidence="2"/>
<dbReference type="EMBL" id="L22971">
    <property type="protein sequence ID" value="AAA26587.1"/>
    <property type="molecule type" value="Genomic_DNA"/>
</dbReference>
<dbReference type="SMR" id="P52201"/>
<dbReference type="STRING" id="2133.SCITRI_00275"/>
<dbReference type="UniPathway" id="UPA00074">
    <property type="reaction ID" value="UER00132"/>
</dbReference>
<dbReference type="UniPathway" id="UPA00075">
    <property type="reaction ID" value="UER00336"/>
</dbReference>
<dbReference type="GO" id="GO:0005829">
    <property type="term" value="C:cytosol"/>
    <property type="evidence" value="ECO:0007669"/>
    <property type="project" value="TreeGrafter"/>
</dbReference>
<dbReference type="GO" id="GO:0070626">
    <property type="term" value="F:(S)-2-(5-amino-1-(5-phospho-D-ribosyl)imidazole-4-carboxamido) succinate lyase (fumarate-forming) activity"/>
    <property type="evidence" value="ECO:0007669"/>
    <property type="project" value="TreeGrafter"/>
</dbReference>
<dbReference type="GO" id="GO:0004018">
    <property type="term" value="F:N6-(1,2-dicarboxyethyl)AMP AMP-lyase (fumarate-forming) activity"/>
    <property type="evidence" value="ECO:0007669"/>
    <property type="project" value="RHEA"/>
</dbReference>
<dbReference type="GO" id="GO:0044208">
    <property type="term" value="P:'de novo' AMP biosynthetic process"/>
    <property type="evidence" value="ECO:0007669"/>
    <property type="project" value="UniProtKB-UniPathway"/>
</dbReference>
<dbReference type="GO" id="GO:0006189">
    <property type="term" value="P:'de novo' IMP biosynthetic process"/>
    <property type="evidence" value="ECO:0007669"/>
    <property type="project" value="UniProtKB-UniPathway"/>
</dbReference>
<dbReference type="Gene3D" id="1.10.275.10">
    <property type="entry name" value="Fumarase/aspartase (N-terminal domain)"/>
    <property type="match status" value="1"/>
</dbReference>
<dbReference type="InterPro" id="IPR024083">
    <property type="entry name" value="Fumarase/histidase_N"/>
</dbReference>
<dbReference type="InterPro" id="IPR008948">
    <property type="entry name" value="L-Aspartase-like"/>
</dbReference>
<dbReference type="PANTHER" id="PTHR43172">
    <property type="entry name" value="ADENYLOSUCCINATE LYASE"/>
    <property type="match status" value="1"/>
</dbReference>
<dbReference type="PANTHER" id="PTHR43172:SF1">
    <property type="entry name" value="ADENYLOSUCCINATE LYASE"/>
    <property type="match status" value="1"/>
</dbReference>
<dbReference type="SUPFAM" id="SSF48557">
    <property type="entry name" value="L-aspartase-like"/>
    <property type="match status" value="1"/>
</dbReference>
<sequence length="88" mass="10264">MIERYFVTEIGKIWSDENKYNTWAKVELLVCEGWAQIGLIPPTDIEKIKTNLTVNLPRMLELEAETKHDVVAFTRMLSETLGPEKKWI</sequence>
<feature type="chain" id="PRO_0000137883" description="Adenylosuccinate lyase">
    <location>
        <begin position="1"/>
        <end position="88" status="greater than"/>
    </location>
</feature>
<feature type="binding site" evidence="2">
    <location>
        <begin position="4"/>
        <end position="5"/>
    </location>
    <ligand>
        <name>N(6)-(1,2-dicarboxyethyl)-AMP</name>
        <dbReference type="ChEBI" id="CHEBI:57567"/>
    </ligand>
</feature>
<feature type="binding site" evidence="2">
    <location>
        <begin position="67"/>
        <end position="69"/>
    </location>
    <ligand>
        <name>N(6)-(1,2-dicarboxyethyl)-AMP</name>
        <dbReference type="ChEBI" id="CHEBI:57567"/>
    </ligand>
</feature>
<feature type="non-terminal residue">
    <location>
        <position position="88"/>
    </location>
</feature>
<gene>
    <name type="primary">purB</name>
</gene>
<proteinExistence type="inferred from homology"/>
<protein>
    <recommendedName>
        <fullName>Adenylosuccinate lyase</fullName>
        <shortName>ASL</shortName>
        <ecNumber evidence="2">4.3.2.2</ecNumber>
    </recommendedName>
    <alternativeName>
        <fullName>Adenylosuccinase</fullName>
        <shortName>ASase</shortName>
    </alternativeName>
</protein>